<keyword id="KW-0903">Direct protein sequencing</keyword>
<keyword id="KW-1015">Disulfide bond</keyword>
<keyword id="KW-0959">Myotoxin</keyword>
<keyword id="KW-0964">Secreted</keyword>
<keyword id="KW-0732">Signal</keyword>
<keyword id="KW-0800">Toxin</keyword>
<dbReference type="EMBL" id="EV854871">
    <property type="status" value="NOT_ANNOTATED_CDS"/>
    <property type="molecule type" value="mRNA"/>
</dbReference>
<dbReference type="SMR" id="C0HKC2"/>
<dbReference type="GO" id="GO:0005576">
    <property type="term" value="C:extracellular region"/>
    <property type="evidence" value="ECO:0007669"/>
    <property type="project" value="UniProtKB-SubCell"/>
</dbReference>
<dbReference type="GO" id="GO:0005509">
    <property type="term" value="F:calcium ion binding"/>
    <property type="evidence" value="ECO:0007669"/>
    <property type="project" value="InterPro"/>
</dbReference>
<dbReference type="GO" id="GO:0047498">
    <property type="term" value="F:calcium-dependent phospholipase A2 activity"/>
    <property type="evidence" value="ECO:0007669"/>
    <property type="project" value="TreeGrafter"/>
</dbReference>
<dbReference type="GO" id="GO:0005543">
    <property type="term" value="F:phospholipid binding"/>
    <property type="evidence" value="ECO:0007669"/>
    <property type="project" value="TreeGrafter"/>
</dbReference>
<dbReference type="GO" id="GO:0090729">
    <property type="term" value="F:toxin activity"/>
    <property type="evidence" value="ECO:0007669"/>
    <property type="project" value="UniProtKB-KW"/>
</dbReference>
<dbReference type="GO" id="GO:0050482">
    <property type="term" value="P:arachidonate secretion"/>
    <property type="evidence" value="ECO:0007669"/>
    <property type="project" value="InterPro"/>
</dbReference>
<dbReference type="GO" id="GO:0016042">
    <property type="term" value="P:lipid catabolic process"/>
    <property type="evidence" value="ECO:0007669"/>
    <property type="project" value="InterPro"/>
</dbReference>
<dbReference type="GO" id="GO:0042130">
    <property type="term" value="P:negative regulation of T cell proliferation"/>
    <property type="evidence" value="ECO:0007669"/>
    <property type="project" value="TreeGrafter"/>
</dbReference>
<dbReference type="GO" id="GO:0006644">
    <property type="term" value="P:phospholipid metabolic process"/>
    <property type="evidence" value="ECO:0007669"/>
    <property type="project" value="InterPro"/>
</dbReference>
<dbReference type="CDD" id="cd00125">
    <property type="entry name" value="PLA2c"/>
    <property type="match status" value="1"/>
</dbReference>
<dbReference type="FunFam" id="1.20.90.10:FF:000001">
    <property type="entry name" value="Basic phospholipase A2 homolog"/>
    <property type="match status" value="1"/>
</dbReference>
<dbReference type="Gene3D" id="1.20.90.10">
    <property type="entry name" value="Phospholipase A2 domain"/>
    <property type="match status" value="1"/>
</dbReference>
<dbReference type="InterPro" id="IPR001211">
    <property type="entry name" value="PLipase_A2"/>
</dbReference>
<dbReference type="InterPro" id="IPR033112">
    <property type="entry name" value="PLipase_A2_Asp_AS"/>
</dbReference>
<dbReference type="InterPro" id="IPR016090">
    <property type="entry name" value="PLipase_A2_dom"/>
</dbReference>
<dbReference type="InterPro" id="IPR036444">
    <property type="entry name" value="PLipase_A2_dom_sf"/>
</dbReference>
<dbReference type="InterPro" id="IPR033113">
    <property type="entry name" value="PLipase_A2_His_AS"/>
</dbReference>
<dbReference type="PANTHER" id="PTHR11716">
    <property type="entry name" value="PHOSPHOLIPASE A2 FAMILY MEMBER"/>
    <property type="match status" value="1"/>
</dbReference>
<dbReference type="PANTHER" id="PTHR11716:SF9">
    <property type="entry name" value="PHOSPHOLIPASE A2, MEMBRANE ASSOCIATED"/>
    <property type="match status" value="1"/>
</dbReference>
<dbReference type="Pfam" id="PF00068">
    <property type="entry name" value="Phospholip_A2_1"/>
    <property type="match status" value="1"/>
</dbReference>
<dbReference type="PRINTS" id="PR00389">
    <property type="entry name" value="PHPHLIPASEA2"/>
</dbReference>
<dbReference type="SMART" id="SM00085">
    <property type="entry name" value="PA2c"/>
    <property type="match status" value="1"/>
</dbReference>
<dbReference type="SUPFAM" id="SSF48619">
    <property type="entry name" value="Phospholipase A2, PLA2"/>
    <property type="match status" value="1"/>
</dbReference>
<dbReference type="PROSITE" id="PS00119">
    <property type="entry name" value="PA2_ASP"/>
    <property type="match status" value="1"/>
</dbReference>
<dbReference type="PROSITE" id="PS00118">
    <property type="entry name" value="PA2_HIS"/>
    <property type="match status" value="1"/>
</dbReference>
<feature type="signal peptide" evidence="5">
    <location>
        <begin position="1"/>
        <end position="16"/>
    </location>
</feature>
<feature type="chain" id="PRO_0000442173" description="Basic phospholipase A2 homolog APL-K49" evidence="10">
    <location>
        <begin position="17"/>
        <end position="137"/>
    </location>
</feature>
<feature type="region of interest" description="Important for membrane-damaging activities in eukaryotes and bacteria; heparin-binding" evidence="3">
    <location>
        <begin position="121"/>
        <end position="133"/>
    </location>
</feature>
<feature type="site" description="Important residue of the cationic membrane-docking site (MDoS)" evidence="1">
    <location>
        <position position="121"/>
    </location>
</feature>
<feature type="site" description="Important residue of the cationic membrane-docking site (MDoS)" evidence="1">
    <location>
        <position position="124"/>
    </location>
</feature>
<feature type="site" description="Hydrophobic membrane-disruption site (MDiS)" evidence="1">
    <location>
        <position position="127"/>
    </location>
</feature>
<feature type="site" description="Cationic membrane-docking site (MDoS)" evidence="1">
    <location>
        <position position="128"/>
    </location>
</feature>
<feature type="site" description="Cationic membrane-docking site (MDoS)" evidence="1">
    <location>
        <position position="133"/>
    </location>
</feature>
<feature type="disulfide bond" evidence="4">
    <location>
        <begin position="42"/>
        <end position="131"/>
    </location>
</feature>
<feature type="disulfide bond" evidence="4">
    <location>
        <begin position="44"/>
        <end position="60"/>
    </location>
</feature>
<feature type="disulfide bond" evidence="4">
    <location>
        <begin position="59"/>
        <end position="111"/>
    </location>
</feature>
<feature type="disulfide bond" evidence="4">
    <location>
        <begin position="65"/>
        <end position="137"/>
    </location>
</feature>
<feature type="disulfide bond" evidence="4">
    <location>
        <begin position="66"/>
        <end position="104"/>
    </location>
</feature>
<feature type="disulfide bond" evidence="4">
    <location>
        <begin position="73"/>
        <end position="97"/>
    </location>
</feature>
<feature type="disulfide bond" evidence="4">
    <location>
        <begin position="91"/>
        <end position="102"/>
    </location>
</feature>
<name>PA2HB_AGKPL</name>
<sequence length="137" mass="15713">MRTLWIVALLLVGVEGSVLELGKMILQETGKNAITSYGSYGCNCGWGHRGQPKDATDRCCFVHKCCYKKLTDCNHKTDRYSYSWKNKAIICEEKNPCLKEMCECDKAVAICLRENLDTYNKKYKAYFKLKCKKPDTC</sequence>
<proteinExistence type="evidence at protein level"/>
<protein>
    <recommendedName>
        <fullName evidence="7">Basic phospholipase A2 homolog APL-K49</fullName>
        <shortName evidence="2">svPLA2 homolog</shortName>
    </recommendedName>
    <alternativeName>
        <fullName evidence="7">AplP2</fullName>
    </alternativeName>
</protein>
<comment type="function">
    <text evidence="1 5 6">Snake venom phospholipase A2 (PLA2) that lacks enzymatic activity (PubMed:28633930). Does not show antibacterial activity (PubMed:29928892). Is myotoxic and displays edema-inducing activities (By similarity). A model of myotoxic mechanism has been proposed: an apo Lys49-PLA2 is activated by the entrance of a hydrophobic molecule (e.g. fatty acid) at the hydrophobic channel of the protein leading to a reorientation of a monomer (By similarity). This reorientation causes a transition between 'inactive' to 'active' states, causing alignment of C-terminal and membrane-docking sites (MDoS) side-by-side and putting the membrane-disruption sites (MDiS) in the same plane, exposed to solvent and in a symmetric position for both monomers (By similarity). The MDoS region stabilizes the toxin on membrane by the interaction of charged residues with phospholipid head groups (By similarity). Subsequently, the MDiS region destabilizes the membrane with penetration of hydrophobic residues (By similarity). This insertion causes a disorganization of the membrane, allowing an uncontrolled influx of ions (i.e. calcium and sodium), and eventually triggering irreversible intracellular alterations and cell death (By similarity).</text>
</comment>
<comment type="subunit">
    <text evidence="5">Monomer.</text>
</comment>
<comment type="subcellular location">
    <subcellularLocation>
        <location evidence="5">Secreted</location>
    </subcellularLocation>
</comment>
<comment type="tissue specificity">
    <text evidence="9">Expressed by the venom gland.</text>
</comment>
<comment type="similarity">
    <text evidence="8">Belongs to the phospholipase A2 family. Group II subfamily. K49 sub-subfamily.</text>
</comment>
<comment type="caution">
    <text evidence="8">Does not bind calcium as one of the calcium-binding ligands is lost (Asp-&gt;Lys in position 64, which corresponds to 'Lys-49' in the current nomenclature).</text>
</comment>
<evidence type="ECO:0000250" key="1">
    <source>
        <dbReference type="UniProtKB" id="I6L8L6"/>
    </source>
</evidence>
<evidence type="ECO:0000250" key="2">
    <source>
        <dbReference type="UniProtKB" id="P04361"/>
    </source>
</evidence>
<evidence type="ECO:0000250" key="3">
    <source>
        <dbReference type="UniProtKB" id="P24605"/>
    </source>
</evidence>
<evidence type="ECO:0000250" key="4">
    <source>
        <dbReference type="UniProtKB" id="Q90249"/>
    </source>
</evidence>
<evidence type="ECO:0000269" key="5">
    <source>
    </source>
</evidence>
<evidence type="ECO:0000269" key="6">
    <source>
    </source>
</evidence>
<evidence type="ECO:0000303" key="7">
    <source>
    </source>
</evidence>
<evidence type="ECO:0000305" key="8"/>
<evidence type="ECO:0000305" key="9">
    <source>
    </source>
</evidence>
<evidence type="ECO:0000305" key="10">
    <source>
    </source>
</evidence>
<accession>C0HKC2</accession>
<reference key="1">
    <citation type="journal article" date="2008" name="Toxicon">
        <title>Complementary DNA sequencing and identification of mRNAs from the venomous gland of Agkistrodon piscivorus leucostoma.</title>
        <authorList>
            <person name="Jia Y."/>
            <person name="Cantu B.A."/>
            <person name="Sanchez E.E."/>
            <person name="Perez J.C."/>
        </authorList>
    </citation>
    <scope>NUCLEOTIDE SEQUENCE [MRNA]</scope>
    <source>
        <tissue>Venom gland</tissue>
    </source>
</reference>
<reference key="2">
    <citation type="journal article" date="2017" name="Toxicon">
        <title>Phospholipase A2 in the venom of three cottonmouth snakes.</title>
        <authorList>
            <person name="Jia Y."/>
            <person name="Ermolinsky B."/>
            <person name="Garza A."/>
            <person name="Provenzano D."/>
        </authorList>
    </citation>
    <scope>PROTEIN SEQUENCE OF 17-32</scope>
    <scope>FUNCTION</scope>
    <scope>SUBUNIT</scope>
    <scope>SUBCELLULAR LOCATION</scope>
    <source>
        <tissue>Venom</tissue>
    </source>
</reference>
<reference key="3">
    <citation type="journal article" date="2018" name="Toxicon">
        <title>Phospholipases A2 purified from cottonmouth snake venoms display no antibacterial effect against four representative bacterial species.</title>
        <authorList>
            <person name="Jia Y."/>
            <person name="Villarreal J."/>
        </authorList>
    </citation>
    <scope>FUNCTION</scope>
</reference>
<organism>
    <name type="scientific">Agkistrodon piscivorus leucostoma</name>
    <name type="common">Western cottonmouth</name>
    <name type="synonym">Acontias leucostoma</name>
    <dbReference type="NCBI Taxonomy" id="459671"/>
    <lineage>
        <taxon>Eukaryota</taxon>
        <taxon>Metazoa</taxon>
        <taxon>Chordata</taxon>
        <taxon>Craniata</taxon>
        <taxon>Vertebrata</taxon>
        <taxon>Euteleostomi</taxon>
        <taxon>Lepidosauria</taxon>
        <taxon>Squamata</taxon>
        <taxon>Bifurcata</taxon>
        <taxon>Unidentata</taxon>
        <taxon>Episquamata</taxon>
        <taxon>Toxicofera</taxon>
        <taxon>Serpentes</taxon>
        <taxon>Colubroidea</taxon>
        <taxon>Viperidae</taxon>
        <taxon>Crotalinae</taxon>
        <taxon>Agkistrodon</taxon>
    </lineage>
</organism>